<dbReference type="EMBL" id="CU468230">
    <property type="protein sequence ID" value="CAP02514.1"/>
    <property type="molecule type" value="Genomic_DNA"/>
</dbReference>
<dbReference type="SMR" id="B0VLZ7"/>
<dbReference type="KEGG" id="abm:ABSDF3244"/>
<dbReference type="HOGENOM" id="CLU_086499_3_2_6"/>
<dbReference type="Proteomes" id="UP000001741">
    <property type="component" value="Chromosome"/>
</dbReference>
<dbReference type="GO" id="GO:0022625">
    <property type="term" value="C:cytosolic large ribosomal subunit"/>
    <property type="evidence" value="ECO:0007669"/>
    <property type="project" value="TreeGrafter"/>
</dbReference>
<dbReference type="GO" id="GO:0003729">
    <property type="term" value="F:mRNA binding"/>
    <property type="evidence" value="ECO:0007669"/>
    <property type="project" value="TreeGrafter"/>
</dbReference>
<dbReference type="GO" id="GO:0003735">
    <property type="term" value="F:structural constituent of ribosome"/>
    <property type="evidence" value="ECO:0007669"/>
    <property type="project" value="InterPro"/>
</dbReference>
<dbReference type="GO" id="GO:0006412">
    <property type="term" value="P:translation"/>
    <property type="evidence" value="ECO:0007669"/>
    <property type="project" value="UniProtKB-UniRule"/>
</dbReference>
<dbReference type="CDD" id="cd00387">
    <property type="entry name" value="Ribosomal_L7_L12"/>
    <property type="match status" value="1"/>
</dbReference>
<dbReference type="FunFam" id="3.30.1390.10:FF:000001">
    <property type="entry name" value="50S ribosomal protein L7/L12"/>
    <property type="match status" value="1"/>
</dbReference>
<dbReference type="Gene3D" id="3.30.1390.10">
    <property type="match status" value="1"/>
</dbReference>
<dbReference type="Gene3D" id="1.20.5.710">
    <property type="entry name" value="Single helix bin"/>
    <property type="match status" value="1"/>
</dbReference>
<dbReference type="HAMAP" id="MF_00368">
    <property type="entry name" value="Ribosomal_bL12"/>
    <property type="match status" value="1"/>
</dbReference>
<dbReference type="InterPro" id="IPR000206">
    <property type="entry name" value="Ribosomal_bL12"/>
</dbReference>
<dbReference type="InterPro" id="IPR013823">
    <property type="entry name" value="Ribosomal_bL12_C"/>
</dbReference>
<dbReference type="InterPro" id="IPR014719">
    <property type="entry name" value="Ribosomal_bL12_C/ClpS-like"/>
</dbReference>
<dbReference type="InterPro" id="IPR008932">
    <property type="entry name" value="Ribosomal_bL12_oligo"/>
</dbReference>
<dbReference type="InterPro" id="IPR036235">
    <property type="entry name" value="Ribosomal_bL12_oligo_N_sf"/>
</dbReference>
<dbReference type="NCBIfam" id="TIGR00855">
    <property type="entry name" value="L12"/>
    <property type="match status" value="1"/>
</dbReference>
<dbReference type="PANTHER" id="PTHR45987">
    <property type="entry name" value="39S RIBOSOMAL PROTEIN L12"/>
    <property type="match status" value="1"/>
</dbReference>
<dbReference type="PANTHER" id="PTHR45987:SF4">
    <property type="entry name" value="LARGE RIBOSOMAL SUBUNIT PROTEIN BL12M"/>
    <property type="match status" value="1"/>
</dbReference>
<dbReference type="Pfam" id="PF00542">
    <property type="entry name" value="Ribosomal_L12"/>
    <property type="match status" value="1"/>
</dbReference>
<dbReference type="Pfam" id="PF16320">
    <property type="entry name" value="Ribosomal_L12_N"/>
    <property type="match status" value="1"/>
</dbReference>
<dbReference type="SUPFAM" id="SSF54736">
    <property type="entry name" value="ClpS-like"/>
    <property type="match status" value="1"/>
</dbReference>
<dbReference type="SUPFAM" id="SSF48300">
    <property type="entry name" value="Ribosomal protein L7/12, oligomerisation (N-terminal) domain"/>
    <property type="match status" value="1"/>
</dbReference>
<sequence length="123" mass="12740">MALTNEEILNAVAEKTVLELVELISAFEEKFNVSAAAVAVAAPAGGAAAAAEEQSEFNVELTSFGANKVAVIKAVREATGLGLKEAKDLVEGAPQVLKEGVSKEEGEELKKKLEEAGATVTLK</sequence>
<evidence type="ECO:0000255" key="1">
    <source>
        <dbReference type="HAMAP-Rule" id="MF_00368"/>
    </source>
</evidence>
<evidence type="ECO:0000305" key="2"/>
<feature type="chain" id="PRO_1000121377" description="Large ribosomal subunit protein bL12">
    <location>
        <begin position="1"/>
        <end position="123"/>
    </location>
</feature>
<accession>B0VLZ7</accession>
<proteinExistence type="inferred from homology"/>
<reference key="1">
    <citation type="journal article" date="2008" name="PLoS ONE">
        <title>Comparative analysis of Acinetobacters: three genomes for three lifestyles.</title>
        <authorList>
            <person name="Vallenet D."/>
            <person name="Nordmann P."/>
            <person name="Barbe V."/>
            <person name="Poirel L."/>
            <person name="Mangenot S."/>
            <person name="Bataille E."/>
            <person name="Dossat C."/>
            <person name="Gas S."/>
            <person name="Kreimeyer A."/>
            <person name="Lenoble P."/>
            <person name="Oztas S."/>
            <person name="Poulain J."/>
            <person name="Segurens B."/>
            <person name="Robert C."/>
            <person name="Abergel C."/>
            <person name="Claverie J.-M."/>
            <person name="Raoult D."/>
            <person name="Medigue C."/>
            <person name="Weissenbach J."/>
            <person name="Cruveiller S."/>
        </authorList>
    </citation>
    <scope>NUCLEOTIDE SEQUENCE [LARGE SCALE GENOMIC DNA]</scope>
    <source>
        <strain>SDF</strain>
    </source>
</reference>
<name>RL7_ACIBS</name>
<organism>
    <name type="scientific">Acinetobacter baumannii (strain SDF)</name>
    <dbReference type="NCBI Taxonomy" id="509170"/>
    <lineage>
        <taxon>Bacteria</taxon>
        <taxon>Pseudomonadati</taxon>
        <taxon>Pseudomonadota</taxon>
        <taxon>Gammaproteobacteria</taxon>
        <taxon>Moraxellales</taxon>
        <taxon>Moraxellaceae</taxon>
        <taxon>Acinetobacter</taxon>
        <taxon>Acinetobacter calcoaceticus/baumannii complex</taxon>
    </lineage>
</organism>
<keyword id="KW-0687">Ribonucleoprotein</keyword>
<keyword id="KW-0689">Ribosomal protein</keyword>
<protein>
    <recommendedName>
        <fullName evidence="1">Large ribosomal subunit protein bL12</fullName>
    </recommendedName>
    <alternativeName>
        <fullName evidence="2">50S ribosomal protein L7/L12</fullName>
    </alternativeName>
</protein>
<comment type="function">
    <text evidence="1">Forms part of the ribosomal stalk which helps the ribosome interact with GTP-bound translation factors. Is thus essential for accurate translation.</text>
</comment>
<comment type="subunit">
    <text evidence="1">Homodimer. Part of the ribosomal stalk of the 50S ribosomal subunit. Forms a multimeric L10(L12)X complex, where L10 forms an elongated spine to which 2 to 4 L12 dimers bind in a sequential fashion. Binds GTP-bound translation factors.</text>
</comment>
<comment type="similarity">
    <text evidence="1">Belongs to the bacterial ribosomal protein bL12 family.</text>
</comment>
<gene>
    <name evidence="1" type="primary">rplL</name>
    <name type="ordered locus">ABSDF3244</name>
</gene>